<reference key="1">
    <citation type="journal article" date="2007" name="BMC Microbiol.">
        <title>Subtle genetic changes enhance virulence of methicillin resistant and sensitive Staphylococcus aureus.</title>
        <authorList>
            <person name="Highlander S.K."/>
            <person name="Hulten K.G."/>
            <person name="Qin X."/>
            <person name="Jiang H."/>
            <person name="Yerrapragada S."/>
            <person name="Mason E.O. Jr."/>
            <person name="Shang Y."/>
            <person name="Williams T.M."/>
            <person name="Fortunov R.M."/>
            <person name="Liu Y."/>
            <person name="Igboeli O."/>
            <person name="Petrosino J."/>
            <person name="Tirumalai M."/>
            <person name="Uzman A."/>
            <person name="Fox G.E."/>
            <person name="Cardenas A.M."/>
            <person name="Muzny D.M."/>
            <person name="Hemphill L."/>
            <person name="Ding Y."/>
            <person name="Dugan S."/>
            <person name="Blyth P.R."/>
            <person name="Buhay C.J."/>
            <person name="Dinh H.H."/>
            <person name="Hawes A.C."/>
            <person name="Holder M."/>
            <person name="Kovar C.L."/>
            <person name="Lee S.L."/>
            <person name="Liu W."/>
            <person name="Nazareth L.V."/>
            <person name="Wang Q."/>
            <person name="Zhou J."/>
            <person name="Kaplan S.L."/>
            <person name="Weinstock G.M."/>
        </authorList>
    </citation>
    <scope>NUCLEOTIDE SEQUENCE [LARGE SCALE GENOMIC DNA]</scope>
    <source>
        <strain>USA300 / TCH1516</strain>
    </source>
</reference>
<name>MNHF1_STAAT</name>
<gene>
    <name type="primary">mnhF1</name>
    <name type="ordered locus">USA300HOU_0907</name>
</gene>
<proteinExistence type="inferred from homology"/>
<organism>
    <name type="scientific">Staphylococcus aureus (strain USA300 / TCH1516)</name>
    <dbReference type="NCBI Taxonomy" id="451516"/>
    <lineage>
        <taxon>Bacteria</taxon>
        <taxon>Bacillati</taxon>
        <taxon>Bacillota</taxon>
        <taxon>Bacilli</taxon>
        <taxon>Bacillales</taxon>
        <taxon>Staphylococcaceae</taxon>
        <taxon>Staphylococcus</taxon>
    </lineage>
</organism>
<sequence>MNHNVIIVIALIIVVISMLAMLIRVVLGPSLADRVVALDAIGLQLMAVIALFSILLNIKYMIVVIMMIGILAFLGTAVFSKFMDKGKVIEHDQNHTD</sequence>
<evidence type="ECO:0000250" key="1"/>
<evidence type="ECO:0000255" key="2"/>
<evidence type="ECO:0000305" key="3"/>
<protein>
    <recommendedName>
        <fullName>Na(+)/H(+) antiporter subunit F1</fullName>
    </recommendedName>
    <alternativeName>
        <fullName>Mnh complex subunit F1</fullName>
    </alternativeName>
</protein>
<keyword id="KW-0050">Antiport</keyword>
<keyword id="KW-1003">Cell membrane</keyword>
<keyword id="KW-0375">Hydrogen ion transport</keyword>
<keyword id="KW-0406">Ion transport</keyword>
<keyword id="KW-0472">Membrane</keyword>
<keyword id="KW-0915">Sodium</keyword>
<keyword id="KW-0739">Sodium transport</keyword>
<keyword id="KW-0812">Transmembrane</keyword>
<keyword id="KW-1133">Transmembrane helix</keyword>
<keyword id="KW-0813">Transport</keyword>
<comment type="function">
    <text evidence="1">Mnh complex is a Na(+)/H(+) antiporter involved in Na(+) excretion.</text>
</comment>
<comment type="subunit">
    <text evidence="1">May form a heterooligomeric complex that consists of seven subunits: mnhA1, mnhB1, mnhC1, mnhD1, mnhE1, mnhF1 and mnhG1.</text>
</comment>
<comment type="subcellular location">
    <subcellularLocation>
        <location evidence="3">Cell membrane</location>
        <topology evidence="3">Multi-pass membrane protein</topology>
    </subcellularLocation>
</comment>
<comment type="similarity">
    <text evidence="3">Belongs to the CPA3 antiporters (TC 2.A.63) subunit F family.</text>
</comment>
<dbReference type="EMBL" id="CP000730">
    <property type="protein sequence ID" value="ABX28928.1"/>
    <property type="molecule type" value="Genomic_DNA"/>
</dbReference>
<dbReference type="RefSeq" id="WP_001016306.1">
    <property type="nucleotide sequence ID" value="NC_010079.1"/>
</dbReference>
<dbReference type="SMR" id="A8Z054"/>
<dbReference type="KEGG" id="sax:USA300HOU_0907"/>
<dbReference type="HOGENOM" id="CLU_125825_1_3_9"/>
<dbReference type="GO" id="GO:0005886">
    <property type="term" value="C:plasma membrane"/>
    <property type="evidence" value="ECO:0007669"/>
    <property type="project" value="UniProtKB-SubCell"/>
</dbReference>
<dbReference type="GO" id="GO:0015385">
    <property type="term" value="F:sodium:proton antiporter activity"/>
    <property type="evidence" value="ECO:0007669"/>
    <property type="project" value="TreeGrafter"/>
</dbReference>
<dbReference type="InterPro" id="IPR007208">
    <property type="entry name" value="MrpF/PhaF-like"/>
</dbReference>
<dbReference type="NCBIfam" id="NF009248">
    <property type="entry name" value="PRK12600.1"/>
    <property type="match status" value="1"/>
</dbReference>
<dbReference type="PANTHER" id="PTHR34702">
    <property type="entry name" value="NA(+)/H(+) ANTIPORTER SUBUNIT F1"/>
    <property type="match status" value="1"/>
</dbReference>
<dbReference type="PANTHER" id="PTHR34702:SF1">
    <property type="entry name" value="NA(+)_H(+) ANTIPORTER SUBUNIT F"/>
    <property type="match status" value="1"/>
</dbReference>
<dbReference type="Pfam" id="PF04066">
    <property type="entry name" value="MrpF_PhaF"/>
    <property type="match status" value="1"/>
</dbReference>
<dbReference type="PIRSF" id="PIRSF028784">
    <property type="entry name" value="MrpF"/>
    <property type="match status" value="1"/>
</dbReference>
<accession>A8Z054</accession>
<feature type="chain" id="PRO_0000372157" description="Na(+)/H(+) antiporter subunit F1">
    <location>
        <begin position="1"/>
        <end position="97"/>
    </location>
</feature>
<feature type="transmembrane region" description="Helical" evidence="2">
    <location>
        <begin position="3"/>
        <end position="23"/>
    </location>
</feature>
<feature type="transmembrane region" description="Helical" evidence="2">
    <location>
        <begin position="35"/>
        <end position="55"/>
    </location>
</feature>
<feature type="transmembrane region" description="Helical" evidence="2">
    <location>
        <begin position="60"/>
        <end position="80"/>
    </location>
</feature>